<gene>
    <name evidence="1" type="primary">plsX</name>
    <name type="ordered locus">BURPS1106A_2854</name>
</gene>
<evidence type="ECO:0000255" key="1">
    <source>
        <dbReference type="HAMAP-Rule" id="MF_00019"/>
    </source>
</evidence>
<evidence type="ECO:0000256" key="2">
    <source>
        <dbReference type="SAM" id="MobiDB-lite"/>
    </source>
</evidence>
<keyword id="KW-0963">Cytoplasm</keyword>
<keyword id="KW-0444">Lipid biosynthesis</keyword>
<keyword id="KW-0443">Lipid metabolism</keyword>
<keyword id="KW-0594">Phospholipid biosynthesis</keyword>
<keyword id="KW-1208">Phospholipid metabolism</keyword>
<keyword id="KW-0808">Transferase</keyword>
<comment type="function">
    <text evidence="1">Catalyzes the reversible formation of acyl-phosphate (acyl-PO(4)) from acyl-[acyl-carrier-protein] (acyl-ACP). This enzyme utilizes acyl-ACP as fatty acyl donor, but not acyl-CoA.</text>
</comment>
<comment type="catalytic activity">
    <reaction evidence="1">
        <text>a fatty acyl-[ACP] + phosphate = an acyl phosphate + holo-[ACP]</text>
        <dbReference type="Rhea" id="RHEA:42292"/>
        <dbReference type="Rhea" id="RHEA-COMP:9685"/>
        <dbReference type="Rhea" id="RHEA-COMP:14125"/>
        <dbReference type="ChEBI" id="CHEBI:43474"/>
        <dbReference type="ChEBI" id="CHEBI:59918"/>
        <dbReference type="ChEBI" id="CHEBI:64479"/>
        <dbReference type="ChEBI" id="CHEBI:138651"/>
        <dbReference type="EC" id="2.3.1.274"/>
    </reaction>
</comment>
<comment type="pathway">
    <text evidence="1">Lipid metabolism; phospholipid metabolism.</text>
</comment>
<comment type="subunit">
    <text evidence="1">Homodimer. Probably interacts with PlsY.</text>
</comment>
<comment type="subcellular location">
    <subcellularLocation>
        <location evidence="1">Cytoplasm</location>
    </subcellularLocation>
    <text evidence="1">Associated with the membrane possibly through PlsY.</text>
</comment>
<comment type="similarity">
    <text evidence="1">Belongs to the PlsX family.</text>
</comment>
<proteinExistence type="inferred from homology"/>
<name>PLSX_BURP0</name>
<protein>
    <recommendedName>
        <fullName evidence="1">Phosphate acyltransferase</fullName>
        <ecNumber evidence="1">2.3.1.274</ecNumber>
    </recommendedName>
    <alternativeName>
        <fullName evidence="1">Acyl-ACP phosphotransacylase</fullName>
    </alternativeName>
    <alternativeName>
        <fullName evidence="1">Acyl-[acyl-carrier-protein]--phosphate acyltransferase</fullName>
    </alternativeName>
    <alternativeName>
        <fullName evidence="1">Phosphate-acyl-ACP acyltransferase</fullName>
    </alternativeName>
</protein>
<reference key="1">
    <citation type="journal article" date="2010" name="Genome Biol. Evol.">
        <title>Continuing evolution of Burkholderia mallei through genome reduction and large-scale rearrangements.</title>
        <authorList>
            <person name="Losada L."/>
            <person name="Ronning C.M."/>
            <person name="DeShazer D."/>
            <person name="Woods D."/>
            <person name="Fedorova N."/>
            <person name="Kim H.S."/>
            <person name="Shabalina S.A."/>
            <person name="Pearson T.R."/>
            <person name="Brinkac L."/>
            <person name="Tan P."/>
            <person name="Nandi T."/>
            <person name="Crabtree J."/>
            <person name="Badger J."/>
            <person name="Beckstrom-Sternberg S."/>
            <person name="Saqib M."/>
            <person name="Schutzer S.E."/>
            <person name="Keim P."/>
            <person name="Nierman W.C."/>
        </authorList>
    </citation>
    <scope>NUCLEOTIDE SEQUENCE [LARGE SCALE GENOMIC DNA]</scope>
    <source>
        <strain>1106a</strain>
    </source>
</reference>
<feature type="chain" id="PRO_1000001732" description="Phosphate acyltransferase">
    <location>
        <begin position="1"/>
        <end position="368"/>
    </location>
</feature>
<feature type="region of interest" description="Disordered" evidence="2">
    <location>
        <begin position="334"/>
        <end position="368"/>
    </location>
</feature>
<accession>A3NXN0</accession>
<organism>
    <name type="scientific">Burkholderia pseudomallei (strain 1106a)</name>
    <dbReference type="NCBI Taxonomy" id="357348"/>
    <lineage>
        <taxon>Bacteria</taxon>
        <taxon>Pseudomonadati</taxon>
        <taxon>Pseudomonadota</taxon>
        <taxon>Betaproteobacteria</taxon>
        <taxon>Burkholderiales</taxon>
        <taxon>Burkholderiaceae</taxon>
        <taxon>Burkholderia</taxon>
        <taxon>pseudomallei group</taxon>
    </lineage>
</organism>
<dbReference type="EC" id="2.3.1.274" evidence="1"/>
<dbReference type="EMBL" id="CP000572">
    <property type="protein sequence ID" value="ABN91675.1"/>
    <property type="molecule type" value="Genomic_DNA"/>
</dbReference>
<dbReference type="RefSeq" id="WP_004192749.1">
    <property type="nucleotide sequence ID" value="NC_009076.1"/>
</dbReference>
<dbReference type="SMR" id="A3NXN0"/>
<dbReference type="GeneID" id="93061023"/>
<dbReference type="KEGG" id="bpl:BURPS1106A_2854"/>
<dbReference type="HOGENOM" id="CLU_039379_1_0_4"/>
<dbReference type="UniPathway" id="UPA00085"/>
<dbReference type="Proteomes" id="UP000006738">
    <property type="component" value="Chromosome I"/>
</dbReference>
<dbReference type="GO" id="GO:0005737">
    <property type="term" value="C:cytoplasm"/>
    <property type="evidence" value="ECO:0007669"/>
    <property type="project" value="UniProtKB-SubCell"/>
</dbReference>
<dbReference type="GO" id="GO:0043811">
    <property type="term" value="F:phosphate:acyl-[acyl carrier protein] acyltransferase activity"/>
    <property type="evidence" value="ECO:0007669"/>
    <property type="project" value="UniProtKB-UniRule"/>
</dbReference>
<dbReference type="GO" id="GO:0006633">
    <property type="term" value="P:fatty acid biosynthetic process"/>
    <property type="evidence" value="ECO:0007669"/>
    <property type="project" value="UniProtKB-UniRule"/>
</dbReference>
<dbReference type="GO" id="GO:0008654">
    <property type="term" value="P:phospholipid biosynthetic process"/>
    <property type="evidence" value="ECO:0007669"/>
    <property type="project" value="UniProtKB-KW"/>
</dbReference>
<dbReference type="Gene3D" id="3.40.718.10">
    <property type="entry name" value="Isopropylmalate Dehydrogenase"/>
    <property type="match status" value="1"/>
</dbReference>
<dbReference type="HAMAP" id="MF_00019">
    <property type="entry name" value="PlsX"/>
    <property type="match status" value="1"/>
</dbReference>
<dbReference type="InterPro" id="IPR003664">
    <property type="entry name" value="FA_synthesis"/>
</dbReference>
<dbReference type="InterPro" id="IPR012281">
    <property type="entry name" value="Phospholipid_synth_PlsX-like"/>
</dbReference>
<dbReference type="NCBIfam" id="TIGR00182">
    <property type="entry name" value="plsX"/>
    <property type="match status" value="1"/>
</dbReference>
<dbReference type="PANTHER" id="PTHR30100">
    <property type="entry name" value="FATTY ACID/PHOSPHOLIPID SYNTHESIS PROTEIN PLSX"/>
    <property type="match status" value="1"/>
</dbReference>
<dbReference type="PANTHER" id="PTHR30100:SF1">
    <property type="entry name" value="PHOSPHATE ACYLTRANSFERASE"/>
    <property type="match status" value="1"/>
</dbReference>
<dbReference type="Pfam" id="PF02504">
    <property type="entry name" value="FA_synthesis"/>
    <property type="match status" value="1"/>
</dbReference>
<dbReference type="PIRSF" id="PIRSF002465">
    <property type="entry name" value="Phsphlp_syn_PlsX"/>
    <property type="match status" value="1"/>
</dbReference>
<dbReference type="SUPFAM" id="SSF53659">
    <property type="entry name" value="Isocitrate/Isopropylmalate dehydrogenase-like"/>
    <property type="match status" value="1"/>
</dbReference>
<sequence length="368" mass="38940">MTVKLTIDCMGGDHGPSVTVPAAVKFVRSHPDAHLMLVGIESAIRAQLKKCKALGEPALSVVPATEVVAMDDPVEVALRKKKDSSMRVALNHVKEGAAQACISAGNTGALMAVSRYVLKTLPGIERPAIAFALPNPTGYTMMLDLGANVDCEPQHLLQFAEMGHALVAALEGKERPTIGLLNIGEEVIKGNETIKRAGELLRASTLNFRGNVEGNDIYKGTVDVIVCDGFVGNVALKTSEGLAQMLADIIKEEFSRSLLSKLMAILALPVLLRFKKRVDHRQYNGAALLGLRSLVIKSHGSADAYAFEWAIKRGYDAVKNGVLERLSRAMAENAAPLGESGRDANGAGQASPSAGQPAEPSAALSSKT</sequence>